<protein>
    <recommendedName>
        <fullName>Osteocalcin</fullName>
    </recommendedName>
    <alternativeName>
        <fullName>Bone Gla protein</fullName>
        <shortName>BGP</shortName>
    </alternativeName>
    <alternativeName>
        <fullName>Gamma-carboxyglutamic acid-containing protein</fullName>
    </alternativeName>
</protein>
<dbReference type="FunCoup" id="P83238">
    <property type="interactions" value="3"/>
</dbReference>
<dbReference type="STRING" id="7955.ENSDARP00000140656"/>
<dbReference type="InParanoid" id="P83238"/>
<dbReference type="PhylomeDB" id="P83238"/>
<dbReference type="Reactome" id="R-DRE-159763">
    <property type="pathway name" value="Transport of gamma-carboxylated protein precursors from the endoplasmic reticulum to the Golgi apparatus"/>
</dbReference>
<dbReference type="Reactome" id="R-DRE-159782">
    <property type="pathway name" value="Removal of aminoterminal propeptides from gamma-carboxylated proteins"/>
</dbReference>
<dbReference type="Proteomes" id="UP000000437">
    <property type="component" value="Unplaced"/>
</dbReference>
<dbReference type="GO" id="GO:0031012">
    <property type="term" value="C:extracellular matrix"/>
    <property type="evidence" value="ECO:0000304"/>
    <property type="project" value="UniProtKB"/>
</dbReference>
<dbReference type="GO" id="GO:0005576">
    <property type="term" value="C:extracellular region"/>
    <property type="evidence" value="ECO:0000318"/>
    <property type="project" value="GO_Central"/>
</dbReference>
<dbReference type="GO" id="GO:0005509">
    <property type="term" value="F:calcium ion binding"/>
    <property type="evidence" value="ECO:0007669"/>
    <property type="project" value="InterPro"/>
</dbReference>
<dbReference type="GO" id="GO:0005179">
    <property type="term" value="F:hormone activity"/>
    <property type="evidence" value="ECO:0000250"/>
    <property type="project" value="UniProtKB"/>
</dbReference>
<dbReference type="GO" id="GO:0046848">
    <property type="term" value="F:hydroxyapatite binding"/>
    <property type="evidence" value="ECO:0000318"/>
    <property type="project" value="GO_Central"/>
</dbReference>
<dbReference type="GO" id="GO:0008147">
    <property type="term" value="F:structural constituent of bone"/>
    <property type="evidence" value="ECO:0000250"/>
    <property type="project" value="UniProtKB"/>
</dbReference>
<dbReference type="GO" id="GO:0060348">
    <property type="term" value="P:bone development"/>
    <property type="evidence" value="ECO:0000318"/>
    <property type="project" value="GO_Central"/>
</dbReference>
<dbReference type="GO" id="GO:0030282">
    <property type="term" value="P:bone mineralization"/>
    <property type="evidence" value="ECO:0000304"/>
    <property type="project" value="UniProtKB"/>
</dbReference>
<dbReference type="GO" id="GO:0032869">
    <property type="term" value="P:cellular response to insulin stimulus"/>
    <property type="evidence" value="ECO:0000250"/>
    <property type="project" value="UniProtKB"/>
</dbReference>
<dbReference type="GO" id="GO:0042593">
    <property type="term" value="P:glucose homeostasis"/>
    <property type="evidence" value="ECO:0000250"/>
    <property type="project" value="UniProtKB"/>
</dbReference>
<dbReference type="GO" id="GO:1903011">
    <property type="term" value="P:negative regulation of bone development"/>
    <property type="evidence" value="ECO:0000250"/>
    <property type="project" value="UniProtKB"/>
</dbReference>
<dbReference type="GO" id="GO:0001649">
    <property type="term" value="P:osteoblast differentiation"/>
    <property type="evidence" value="ECO:0000318"/>
    <property type="project" value="GO_Central"/>
</dbReference>
<dbReference type="GO" id="GO:1900076">
    <property type="term" value="P:regulation of cellular response to insulin stimulus"/>
    <property type="evidence" value="ECO:0007669"/>
    <property type="project" value="InterPro"/>
</dbReference>
<dbReference type="GO" id="GO:0032571">
    <property type="term" value="P:response to vitamin K"/>
    <property type="evidence" value="ECO:0007669"/>
    <property type="project" value="InterPro"/>
</dbReference>
<dbReference type="GO" id="GO:0044342">
    <property type="term" value="P:type B pancreatic cell proliferation"/>
    <property type="evidence" value="ECO:0000250"/>
    <property type="project" value="UniProtKB"/>
</dbReference>
<dbReference type="InterPro" id="IPR035972">
    <property type="entry name" value="GLA-like_dom_SF"/>
</dbReference>
<dbReference type="InterPro" id="IPR000294">
    <property type="entry name" value="GLA_domain"/>
</dbReference>
<dbReference type="InterPro" id="IPR039176">
    <property type="entry name" value="Osteocalcin"/>
</dbReference>
<dbReference type="PANTHER" id="PTHR14235">
    <property type="entry name" value="OSTEOCALCIN"/>
    <property type="match status" value="1"/>
</dbReference>
<dbReference type="PANTHER" id="PTHR14235:SF0">
    <property type="entry name" value="OSTEOCALCIN"/>
    <property type="match status" value="1"/>
</dbReference>
<dbReference type="SUPFAM" id="SSF57630">
    <property type="entry name" value="GLA-domain"/>
    <property type="match status" value="1"/>
</dbReference>
<dbReference type="PROSITE" id="PS00011">
    <property type="entry name" value="GLA_1"/>
    <property type="match status" value="1"/>
</dbReference>
<dbReference type="PROSITE" id="PS50998">
    <property type="entry name" value="GLA_2"/>
    <property type="match status" value="1"/>
</dbReference>
<keyword id="KW-0091">Biomineralization</keyword>
<keyword id="KW-0106">Calcium</keyword>
<keyword id="KW-0903">Direct protein sequencing</keyword>
<keyword id="KW-1015">Disulfide bond</keyword>
<keyword id="KW-0301">Gamma-carboxyglutamic acid</keyword>
<keyword id="KW-0372">Hormone</keyword>
<keyword id="KW-0479">Metal-binding</keyword>
<keyword id="KW-1185">Reference proteome</keyword>
<keyword id="KW-0964">Secreted</keyword>
<accession>P83238</accession>
<organism>
    <name type="scientific">Danio rerio</name>
    <name type="common">Zebrafish</name>
    <name type="synonym">Brachydanio rerio</name>
    <dbReference type="NCBI Taxonomy" id="7955"/>
    <lineage>
        <taxon>Eukaryota</taxon>
        <taxon>Metazoa</taxon>
        <taxon>Chordata</taxon>
        <taxon>Craniata</taxon>
        <taxon>Vertebrata</taxon>
        <taxon>Euteleostomi</taxon>
        <taxon>Actinopterygii</taxon>
        <taxon>Neopterygii</taxon>
        <taxon>Teleostei</taxon>
        <taxon>Ostariophysi</taxon>
        <taxon>Cypriniformes</taxon>
        <taxon>Danionidae</taxon>
        <taxon>Danioninae</taxon>
        <taxon>Danio</taxon>
    </lineage>
</organism>
<proteinExistence type="evidence at protein level"/>
<name>OSTCN_DANRE</name>
<comment type="function">
    <text evidence="3 5">The carboxylated form is one of the main organic components of the bone matrix, which constitutes 1-2% of the total bone protein (PubMed:14668966). The carboxylated form binds strongly to apatite and calcium (By similarity).</text>
</comment>
<comment type="subcellular location">
    <subcellularLocation>
        <location evidence="3">Secreted</location>
    </subcellularLocation>
</comment>
<comment type="PTM">
    <text evidence="4 5 6">Gamma-carboxyglutamate residues are formed by vitamin K dependent carboxylation by GGCX. These residues are essential for the binding of calcium.</text>
</comment>
<comment type="similarity">
    <text evidence="6">Belongs to the osteocalcin/matrix Gla protein family.</text>
</comment>
<evidence type="ECO:0000250" key="1">
    <source>
        <dbReference type="UniProtKB" id="P02820"/>
    </source>
</evidence>
<evidence type="ECO:0000250" key="2">
    <source>
        <dbReference type="UniProtKB" id="P02823"/>
    </source>
</evidence>
<evidence type="ECO:0000250" key="3">
    <source>
        <dbReference type="UniProtKB" id="P86546"/>
    </source>
</evidence>
<evidence type="ECO:0000255" key="4">
    <source>
        <dbReference type="PROSITE-ProRule" id="PRU00463"/>
    </source>
</evidence>
<evidence type="ECO:0000269" key="5">
    <source>
    </source>
</evidence>
<evidence type="ECO:0000305" key="6"/>
<sequence>AGTAXGDLTPFQLESLREVCEVNLACEHMADTXGIVAAYTAYYGY</sequence>
<gene>
    <name type="primary">bglap</name>
</gene>
<feature type="chain" id="PRO_0000148907" description="Osteocalcin">
    <location>
        <begin position="1"/>
        <end position="45" status="greater than"/>
    </location>
</feature>
<feature type="domain" description="Gla" evidence="4">
    <location>
        <begin position="1"/>
        <end position="44"/>
    </location>
</feature>
<feature type="binding site" evidence="1">
    <location>
        <position position="14"/>
    </location>
    <ligand>
        <name>Ca(2+)</name>
        <dbReference type="ChEBI" id="CHEBI:29108"/>
        <label>1</label>
    </ligand>
</feature>
<feature type="binding site" evidence="1">
    <location>
        <position position="18"/>
    </location>
    <ligand>
        <name>Ca(2+)</name>
        <dbReference type="ChEBI" id="CHEBI:29108"/>
        <label>2</label>
    </ligand>
</feature>
<feature type="binding site" evidence="1">
    <location>
        <position position="21"/>
    </location>
    <ligand>
        <name>Ca(2+)</name>
        <dbReference type="ChEBI" id="CHEBI:29108"/>
        <label>2</label>
    </ligand>
</feature>
<feature type="binding site" evidence="1">
    <location>
        <position position="21"/>
    </location>
    <ligand>
        <name>Ca(2+)</name>
        <dbReference type="ChEBI" id="CHEBI:29108"/>
        <label>3</label>
    </ligand>
</feature>
<feature type="binding site" evidence="1">
    <location>
        <position position="27"/>
    </location>
    <ligand>
        <name>Ca(2+)</name>
        <dbReference type="ChEBI" id="CHEBI:29108"/>
        <label>3</label>
    </ligand>
</feature>
<feature type="modified residue" description="4-carboxyglutamate" evidence="4 5">
    <location>
        <position position="14"/>
    </location>
</feature>
<feature type="modified residue" description="4-carboxyglutamate" evidence="4 5">
    <location>
        <position position="18"/>
    </location>
</feature>
<feature type="modified residue" description="4-carboxyglutamate" evidence="4 5">
    <location>
        <position position="21"/>
    </location>
</feature>
<feature type="disulfide bond" evidence="2 4">
    <location>
        <begin position="20"/>
        <end position="26"/>
    </location>
</feature>
<feature type="non-terminal residue">
    <location>
        <position position="45"/>
    </location>
</feature>
<reference evidence="6" key="1">
    <citation type="submission" date="2002-01" db="UniProtKB">
        <authorList>
            <person name="Simes D.C."/>
            <person name="Cancela M.L."/>
        </authorList>
    </citation>
    <scope>PROTEIN SEQUENCE</scope>
    <source>
        <tissue>Cartilage</tissue>
    </source>
</reference>
<reference evidence="6" key="2">
    <citation type="journal article" date="2004" name="Calcif. Tissue Int.">
        <title>Characterization of osteocalcin (BGP) and matrix Gla protein (MGP) fish specific antibodies: validation for immunodetection studies in lower vertebrates.</title>
        <authorList>
            <person name="Simes D.C."/>
            <person name="Williamson M.K."/>
            <person name="Schaff B.J."/>
            <person name="Gavaia P.J."/>
            <person name="Ingleton P.M."/>
            <person name="Price P.A."/>
            <person name="Cancela M.L."/>
        </authorList>
    </citation>
    <scope>PROTEIN SEQUENCE OF 1-21</scope>
    <scope>FUNCTION</scope>
    <scope>GAMMA-CARBOXYGLUTAMATION AT GLU-14; GLU-18 AND GLU-21</scope>
    <source>
        <tissue>Cartilage</tissue>
    </source>
</reference>